<name>MPE1_YEAST</name>
<sequence>MSSTIFYRFKSQRNTSRILFDGTGLTVFDLKREIIQENKLGDGTDFQLKIYNPDTEEEYDDDAFVIPRSTSVIVKRSPAIKSFSVHSRLKGNVGAAALGNATRYVTGRPRVLQKRQHTATTTANVSGTTEEERIASMFATQENQWEQTQEEMSAATPVFFKSQTNKNSAQENEGPPPPGYMCYRCGGRDHWIKNCPTNSDPNFEGKRIRRTTGIPKKFLKSIEIDPETMTPEEMAQRKIMITDEGKFVVQVEDKQSWEDYQRKRENRQIDGDETIWRKGHFKDLPDDLKCPLTGGLLRQPVKTSKCCNIDFSKEALENALVESDFVCPNCETRDILLDSLVPDQDKEKEVETFLKKQEELHGSSKDGNQPETKKMKLMDPTGTAGLNNNTSLPTSVNNGGTPVPPVPLPFGIPPFPMFPMPFMPPTATITNPHQADASPKK</sequence>
<feature type="chain" id="PRO_0000076265" description="Protein MPE1">
    <location>
        <begin position="1"/>
        <end position="441"/>
    </location>
</feature>
<feature type="domain" description="DWNN" evidence="2">
    <location>
        <begin position="5"/>
        <end position="78"/>
    </location>
</feature>
<feature type="zinc finger region" description="CCHC-type" evidence="1">
    <location>
        <begin position="180"/>
        <end position="197"/>
    </location>
</feature>
<feature type="region of interest" description="Disordered" evidence="3">
    <location>
        <begin position="355"/>
        <end position="400"/>
    </location>
</feature>
<feature type="compositionally biased region" description="Basic and acidic residues" evidence="3">
    <location>
        <begin position="355"/>
        <end position="364"/>
    </location>
</feature>
<feature type="compositionally biased region" description="Polar residues" evidence="3">
    <location>
        <begin position="384"/>
        <end position="400"/>
    </location>
</feature>
<feature type="modified residue" description="Phosphoserine" evidence="6">
    <location>
        <position position="221"/>
    </location>
</feature>
<feature type="strand" evidence="7">
    <location>
        <begin position="3"/>
        <end position="9"/>
    </location>
</feature>
<feature type="strand" evidence="7">
    <location>
        <begin position="12"/>
        <end position="14"/>
    </location>
</feature>
<feature type="strand" evidence="7">
    <location>
        <begin position="16"/>
        <end position="26"/>
    </location>
</feature>
<feature type="helix" evidence="7">
    <location>
        <begin position="27"/>
        <end position="37"/>
    </location>
</feature>
<feature type="strand" evidence="7">
    <location>
        <begin position="42"/>
        <end position="51"/>
    </location>
</feature>
<feature type="turn" evidence="7">
    <location>
        <begin position="53"/>
        <end position="55"/>
    </location>
</feature>
<feature type="strand" evidence="7">
    <location>
        <begin position="65"/>
        <end position="67"/>
    </location>
</feature>
<feature type="strand" evidence="7">
    <location>
        <begin position="71"/>
        <end position="78"/>
    </location>
</feature>
<feature type="helix" evidence="7">
    <location>
        <begin position="102"/>
        <end position="104"/>
    </location>
</feature>
<feature type="strand" evidence="8">
    <location>
        <begin position="219"/>
        <end position="223"/>
    </location>
</feature>
<feature type="strand" evidence="8">
    <location>
        <begin position="240"/>
        <end position="250"/>
    </location>
</feature>
<feature type="helix" evidence="8">
    <location>
        <begin position="254"/>
        <end position="264"/>
    </location>
</feature>
<protein>
    <recommendedName>
        <fullName>Protein MPE1</fullName>
    </recommendedName>
</protein>
<evidence type="ECO:0000255" key="1">
    <source>
        <dbReference type="PROSITE-ProRule" id="PRU00047"/>
    </source>
</evidence>
<evidence type="ECO:0000255" key="2">
    <source>
        <dbReference type="PROSITE-ProRule" id="PRU00612"/>
    </source>
</evidence>
<evidence type="ECO:0000256" key="3">
    <source>
        <dbReference type="SAM" id="MobiDB-lite"/>
    </source>
</evidence>
<evidence type="ECO:0000269" key="4">
    <source>
    </source>
</evidence>
<evidence type="ECO:0000269" key="5">
    <source>
    </source>
</evidence>
<evidence type="ECO:0007744" key="6">
    <source>
    </source>
</evidence>
<evidence type="ECO:0007829" key="7">
    <source>
        <dbReference type="PDB" id="6I1D"/>
    </source>
</evidence>
<evidence type="ECO:0007829" key="8">
    <source>
        <dbReference type="PDB" id="7ZGR"/>
    </source>
</evidence>
<comment type="function">
    <text>Component of the cleavage and polyadenylation factor (CPF) complex, which plays a key role in polyadenylation-dependent pre-mRNA 3'-end formation and cooperates with cleavage factors including the CFIA complex and NAB4/CFIB.</text>
</comment>
<comment type="subunit">
    <text evidence="4">Component of the cleavage and polyadenylation factor (CPF) complex, which is composed of PTI1, SYC1, SSU72, GLC7, MPE1, REF2, PFS2, PTA1, YSH1/BRR5, SWD2, CFT2/YDH1, YTH1, CFT1/YHH1, FIP1 and PAP1.</text>
</comment>
<comment type="interaction">
    <interactant intactId="EBI-26710">
        <id>P35728</id>
    </interactant>
    <interactant intactId="EBI-32872">
        <id>Q06632</id>
        <label>CFT1</label>
    </interactant>
    <organismsDiffer>false</organismsDiffer>
    <experiments>6</experiments>
</comment>
<comment type="subcellular location">
    <subcellularLocation>
        <location evidence="4">Nucleus</location>
    </subcellularLocation>
</comment>
<comment type="miscellaneous">
    <text evidence="5">Present with 1130 molecules/cell in log phase SD medium.</text>
</comment>
<keyword id="KW-0002">3D-structure</keyword>
<keyword id="KW-0479">Metal-binding</keyword>
<keyword id="KW-0507">mRNA processing</keyword>
<keyword id="KW-0539">Nucleus</keyword>
<keyword id="KW-0597">Phosphoprotein</keyword>
<keyword id="KW-1185">Reference proteome</keyword>
<keyword id="KW-0862">Zinc</keyword>
<keyword id="KW-0863">Zinc-finger</keyword>
<reference key="1">
    <citation type="journal article" date="1994" name="Yeast">
        <title>Sequence of a 28.6 kb region of yeast chromosome XI includes the FBA1 and TOA2 genes, an open reading frame (ORF) similar to a translationally controlled tumour protein, one ORF containing motifs also found in plant storage proteins and 13 ORFs with weak or no homology to known proteins.</title>
        <authorList>
            <person name="Rasmussen S.W."/>
        </authorList>
    </citation>
    <scope>NUCLEOTIDE SEQUENCE [GENOMIC DNA]</scope>
    <source>
        <strain>ATCC 204508 / S288c</strain>
    </source>
</reference>
<reference key="2">
    <citation type="journal article" date="1994" name="Nature">
        <title>Complete DNA sequence of yeast chromosome XI.</title>
        <authorList>
            <person name="Dujon B."/>
            <person name="Alexandraki D."/>
            <person name="Andre B."/>
            <person name="Ansorge W."/>
            <person name="Baladron V."/>
            <person name="Ballesta J.P.G."/>
            <person name="Banrevi A."/>
            <person name="Bolle P.-A."/>
            <person name="Bolotin-Fukuhara M."/>
            <person name="Bossier P."/>
            <person name="Bou G."/>
            <person name="Boyer J."/>
            <person name="Buitrago M.J."/>
            <person name="Cheret G."/>
            <person name="Colleaux L."/>
            <person name="Daignan-Fornier B."/>
            <person name="del Rey F."/>
            <person name="Dion C."/>
            <person name="Domdey H."/>
            <person name="Duesterhoeft A."/>
            <person name="Duesterhus S."/>
            <person name="Entian K.-D."/>
            <person name="Erfle H."/>
            <person name="Esteban P.F."/>
            <person name="Feldmann H."/>
            <person name="Fernandes L."/>
            <person name="Fobo G.M."/>
            <person name="Fritz C."/>
            <person name="Fukuhara H."/>
            <person name="Gabel C."/>
            <person name="Gaillon L."/>
            <person name="Garcia-Cantalejo J.M."/>
            <person name="Garcia-Ramirez J.J."/>
            <person name="Gent M.E."/>
            <person name="Ghazvini M."/>
            <person name="Goffeau A."/>
            <person name="Gonzalez A."/>
            <person name="Grothues D."/>
            <person name="Guerreiro P."/>
            <person name="Hegemann J.H."/>
            <person name="Hewitt N."/>
            <person name="Hilger F."/>
            <person name="Hollenberg C.P."/>
            <person name="Horaitis O."/>
            <person name="Indge K.J."/>
            <person name="Jacquier A."/>
            <person name="James C.M."/>
            <person name="Jauniaux J.-C."/>
            <person name="Jimenez A."/>
            <person name="Keuchel H."/>
            <person name="Kirchrath L."/>
            <person name="Kleine K."/>
            <person name="Koetter P."/>
            <person name="Legrain P."/>
            <person name="Liebl S."/>
            <person name="Louis E.J."/>
            <person name="Maia e Silva A."/>
            <person name="Marck C."/>
            <person name="Monnier A.-L."/>
            <person name="Moestl D."/>
            <person name="Mueller S."/>
            <person name="Obermaier B."/>
            <person name="Oliver S.G."/>
            <person name="Pallier C."/>
            <person name="Pascolo S."/>
            <person name="Pfeiffer F."/>
            <person name="Philippsen P."/>
            <person name="Planta R.J."/>
            <person name="Pohl F.M."/>
            <person name="Pohl T.M."/>
            <person name="Poehlmann R."/>
            <person name="Portetelle D."/>
            <person name="Purnelle B."/>
            <person name="Puzos V."/>
            <person name="Ramezani Rad M."/>
            <person name="Rasmussen S.W."/>
            <person name="Remacha M.A."/>
            <person name="Revuelta J.L."/>
            <person name="Richard G.-F."/>
            <person name="Rieger M."/>
            <person name="Rodrigues-Pousada C."/>
            <person name="Rose M."/>
            <person name="Rupp T."/>
            <person name="Santos M.A."/>
            <person name="Schwager C."/>
            <person name="Sensen C."/>
            <person name="Skala J."/>
            <person name="Soares H."/>
            <person name="Sor F."/>
            <person name="Stegemann J."/>
            <person name="Tettelin H."/>
            <person name="Thierry A."/>
            <person name="Tzermia M."/>
            <person name="Urrestarazu L.A."/>
            <person name="van Dyck L."/>
            <person name="van Vliet-Reedijk J.C."/>
            <person name="Valens M."/>
            <person name="Vandenbol M."/>
            <person name="Vilela C."/>
            <person name="Vissers S."/>
            <person name="von Wettstein D."/>
            <person name="Voss H."/>
            <person name="Wiemann S."/>
            <person name="Xu G."/>
            <person name="Zimmermann J."/>
            <person name="Haasemann M."/>
            <person name="Becker I."/>
            <person name="Mewes H.-W."/>
        </authorList>
    </citation>
    <scope>NUCLEOTIDE SEQUENCE [LARGE SCALE GENOMIC DNA]</scope>
    <source>
        <strain>ATCC 204508 / S288c</strain>
    </source>
</reference>
<reference key="3">
    <citation type="journal article" date="2014" name="G3 (Bethesda)">
        <title>The reference genome sequence of Saccharomyces cerevisiae: Then and now.</title>
        <authorList>
            <person name="Engel S.R."/>
            <person name="Dietrich F.S."/>
            <person name="Fisk D.G."/>
            <person name="Binkley G."/>
            <person name="Balakrishnan R."/>
            <person name="Costanzo M.C."/>
            <person name="Dwight S.S."/>
            <person name="Hitz B.C."/>
            <person name="Karra K."/>
            <person name="Nash R.S."/>
            <person name="Weng S."/>
            <person name="Wong E.D."/>
            <person name="Lloyd P."/>
            <person name="Skrzypek M.S."/>
            <person name="Miyasato S.R."/>
            <person name="Simison M."/>
            <person name="Cherry J.M."/>
        </authorList>
    </citation>
    <scope>GENOME REANNOTATION</scope>
    <source>
        <strain>ATCC 204508 / S288c</strain>
    </source>
</reference>
<reference key="4">
    <citation type="journal article" date="2003" name="J. Biol. Chem.">
        <title>Organization and function of APT, a subcomplex of the yeast cleavage and polyadenylation factor involved in the formation of mRNA and small nucleolar RNA 3'-ends.</title>
        <authorList>
            <person name="Nedea E."/>
            <person name="He X."/>
            <person name="Kim M."/>
            <person name="Pootoolal J."/>
            <person name="Zhong G."/>
            <person name="Canadien V."/>
            <person name="Hughes T."/>
            <person name="Buratowski S."/>
            <person name="Moore C.L."/>
            <person name="Greenblatt J."/>
        </authorList>
    </citation>
    <scope>IDENTIFICATION IN THE CPF COMPLEX</scope>
    <scope>SUBCELLULAR LOCATION</scope>
    <scope>IDENTIFICATION BY MASS SPECTROMETRY</scope>
</reference>
<reference key="5">
    <citation type="journal article" date="2003" name="Nature">
        <title>Global analysis of protein expression in yeast.</title>
        <authorList>
            <person name="Ghaemmaghami S."/>
            <person name="Huh W.-K."/>
            <person name="Bower K."/>
            <person name="Howson R.W."/>
            <person name="Belle A."/>
            <person name="Dephoure N."/>
            <person name="O'Shea E.K."/>
            <person name="Weissman J.S."/>
        </authorList>
    </citation>
    <scope>LEVEL OF PROTEIN EXPRESSION [LARGE SCALE ANALYSIS]</scope>
</reference>
<reference key="6">
    <citation type="journal article" date="2008" name="Mol. Cell. Proteomics">
        <title>A multidimensional chromatography technology for in-depth phosphoproteome analysis.</title>
        <authorList>
            <person name="Albuquerque C.P."/>
            <person name="Smolka M.B."/>
            <person name="Payne S.H."/>
            <person name="Bafna V."/>
            <person name="Eng J."/>
            <person name="Zhou H."/>
        </authorList>
    </citation>
    <scope>PHOSPHORYLATION [LARGE SCALE ANALYSIS] AT SER-221</scope>
    <scope>IDENTIFICATION BY MASS SPECTROMETRY [LARGE SCALE ANALYSIS]</scope>
</reference>
<dbReference type="EMBL" id="X75781">
    <property type="protein sequence ID" value="CAA53413.1"/>
    <property type="molecule type" value="Genomic_DNA"/>
</dbReference>
<dbReference type="EMBL" id="Z28059">
    <property type="protein sequence ID" value="CAA81896.1"/>
    <property type="molecule type" value="Genomic_DNA"/>
</dbReference>
<dbReference type="EMBL" id="BK006944">
    <property type="protein sequence ID" value="DAA09098.1"/>
    <property type="molecule type" value="Genomic_DNA"/>
</dbReference>
<dbReference type="PIR" id="S37881">
    <property type="entry name" value="S37881"/>
</dbReference>
<dbReference type="RefSeq" id="NP_012864.1">
    <property type="nucleotide sequence ID" value="NM_001179625.1"/>
</dbReference>
<dbReference type="PDB" id="6I1D">
    <property type="method" value="X-ray"/>
    <property type="resolution" value="2.28 A"/>
    <property type="chains" value="B=1-160"/>
</dbReference>
<dbReference type="PDB" id="7ZGP">
    <property type="method" value="EM"/>
    <property type="resolution" value="2.70 A"/>
    <property type="chains" value="F=1-441"/>
</dbReference>
<dbReference type="PDB" id="7ZGR">
    <property type="method" value="EM"/>
    <property type="resolution" value="2.60 A"/>
    <property type="chains" value="F=1-441"/>
</dbReference>
<dbReference type="PDBsum" id="6I1D"/>
<dbReference type="PDBsum" id="7ZGP"/>
<dbReference type="PDBsum" id="7ZGR"/>
<dbReference type="SMR" id="P35728"/>
<dbReference type="BioGRID" id="34074">
    <property type="interactions" value="245"/>
</dbReference>
<dbReference type="ComplexPortal" id="CPX-1053">
    <property type="entry name" value="Cleavage and polyadenylation specificity factor complex"/>
</dbReference>
<dbReference type="DIP" id="DIP-6650N"/>
<dbReference type="FunCoup" id="P35728">
    <property type="interactions" value="209"/>
</dbReference>
<dbReference type="IntAct" id="P35728">
    <property type="interactions" value="63"/>
</dbReference>
<dbReference type="MINT" id="P35728"/>
<dbReference type="STRING" id="4932.YKL059C"/>
<dbReference type="GlyGen" id="P35728">
    <property type="glycosylation" value="3 sites, 1 O-linked glycan (3 sites)"/>
</dbReference>
<dbReference type="iPTMnet" id="P35728"/>
<dbReference type="PaxDb" id="4932-YKL059C"/>
<dbReference type="PeptideAtlas" id="P35728"/>
<dbReference type="EnsemblFungi" id="YKL059C_mRNA">
    <property type="protein sequence ID" value="YKL059C"/>
    <property type="gene ID" value="YKL059C"/>
</dbReference>
<dbReference type="GeneID" id="853806"/>
<dbReference type="KEGG" id="sce:YKL059C"/>
<dbReference type="AGR" id="SGD:S000001542"/>
<dbReference type="SGD" id="S000001542">
    <property type="gene designation" value="MPE1"/>
</dbReference>
<dbReference type="VEuPathDB" id="FungiDB:YKL059C"/>
<dbReference type="eggNOG" id="KOG0314">
    <property type="taxonomic scope" value="Eukaryota"/>
</dbReference>
<dbReference type="GeneTree" id="ENSGT00940000159365"/>
<dbReference type="HOGENOM" id="CLU_019105_0_0_1"/>
<dbReference type="InParanoid" id="P35728"/>
<dbReference type="OMA" id="CGAKDHW"/>
<dbReference type="OrthoDB" id="106784at2759"/>
<dbReference type="BioCyc" id="YEAST:G3O-31858-MONOMER"/>
<dbReference type="Reactome" id="R-SCE-983168">
    <property type="pathway name" value="Antigen processing: Ubiquitination &amp; Proteasome degradation"/>
</dbReference>
<dbReference type="BioGRID-ORCS" id="853806">
    <property type="hits" value="5 hits in 10 CRISPR screens"/>
</dbReference>
<dbReference type="PRO" id="PR:P35728"/>
<dbReference type="Proteomes" id="UP000002311">
    <property type="component" value="Chromosome XI"/>
</dbReference>
<dbReference type="RNAct" id="P35728">
    <property type="molecule type" value="protein"/>
</dbReference>
<dbReference type="GO" id="GO:0005829">
    <property type="term" value="C:cytosol"/>
    <property type="evidence" value="ECO:0000314"/>
    <property type="project" value="SGD"/>
</dbReference>
<dbReference type="GO" id="GO:0005847">
    <property type="term" value="C:mRNA cleavage and polyadenylation specificity factor complex"/>
    <property type="evidence" value="ECO:0000314"/>
    <property type="project" value="SGD"/>
</dbReference>
<dbReference type="GO" id="GO:0005634">
    <property type="term" value="C:nucleus"/>
    <property type="evidence" value="ECO:0000314"/>
    <property type="project" value="SGD"/>
</dbReference>
<dbReference type="GO" id="GO:0036002">
    <property type="term" value="F:pre-mRNA binding"/>
    <property type="evidence" value="ECO:0000314"/>
    <property type="project" value="SGD"/>
</dbReference>
<dbReference type="GO" id="GO:0061630">
    <property type="term" value="F:ubiquitin protein ligase activity"/>
    <property type="evidence" value="ECO:0000315"/>
    <property type="project" value="SGD"/>
</dbReference>
<dbReference type="GO" id="GO:0008270">
    <property type="term" value="F:zinc ion binding"/>
    <property type="evidence" value="ECO:0007669"/>
    <property type="project" value="UniProtKB-KW"/>
</dbReference>
<dbReference type="GO" id="GO:0006397">
    <property type="term" value="P:mRNA processing"/>
    <property type="evidence" value="ECO:0007669"/>
    <property type="project" value="UniProtKB-KW"/>
</dbReference>
<dbReference type="GO" id="GO:0000209">
    <property type="term" value="P:protein polyubiquitination"/>
    <property type="evidence" value="ECO:0000315"/>
    <property type="project" value="SGD"/>
</dbReference>
<dbReference type="GO" id="GO:0016567">
    <property type="term" value="P:protein ubiquitination"/>
    <property type="evidence" value="ECO:0000315"/>
    <property type="project" value="SGD"/>
</dbReference>
<dbReference type="GO" id="GO:0006369">
    <property type="term" value="P:termination of RNA polymerase II transcription"/>
    <property type="evidence" value="ECO:0000314"/>
    <property type="project" value="SGD"/>
</dbReference>
<dbReference type="GO" id="GO:0030846">
    <property type="term" value="P:termination of RNA polymerase II transcription, poly(A)-coupled"/>
    <property type="evidence" value="ECO:0000303"/>
    <property type="project" value="ComplexPortal"/>
</dbReference>
<dbReference type="GO" id="GO:0006511">
    <property type="term" value="P:ubiquitin-dependent protein catabolic process"/>
    <property type="evidence" value="ECO:0000318"/>
    <property type="project" value="GO_Central"/>
</dbReference>
<dbReference type="CDD" id="cd16620">
    <property type="entry name" value="vRING-HC-C4C4_RBBP6"/>
    <property type="match status" value="1"/>
</dbReference>
<dbReference type="FunFam" id="4.10.60.10:FF:000005">
    <property type="entry name" value="E3 ubiquitin-protein ligase RBBP6"/>
    <property type="match status" value="1"/>
</dbReference>
<dbReference type="FunFam" id="3.10.20.90:FF:000070">
    <property type="entry name" value="E3 ubiquitin-protein ligase RBBP6 isoform X2"/>
    <property type="match status" value="1"/>
</dbReference>
<dbReference type="Gene3D" id="3.10.20.90">
    <property type="entry name" value="Phosphatidylinositol 3-kinase Catalytic Subunit, Chain A, domain 1"/>
    <property type="match status" value="1"/>
</dbReference>
<dbReference type="Gene3D" id="4.10.60.10">
    <property type="entry name" value="Zinc finger, CCHC-type"/>
    <property type="match status" value="1"/>
</dbReference>
<dbReference type="Gene3D" id="3.30.40.10">
    <property type="entry name" value="Zinc/RING finger domain, C3HC4 (zinc finger)"/>
    <property type="match status" value="1"/>
</dbReference>
<dbReference type="InterPro" id="IPR014891">
    <property type="entry name" value="DWNN_domain"/>
</dbReference>
<dbReference type="InterPro" id="IPR033489">
    <property type="entry name" value="RBBP6"/>
</dbReference>
<dbReference type="InterPro" id="IPR001878">
    <property type="entry name" value="Znf_CCHC"/>
</dbReference>
<dbReference type="InterPro" id="IPR036875">
    <property type="entry name" value="Znf_CCHC_sf"/>
</dbReference>
<dbReference type="InterPro" id="IPR013083">
    <property type="entry name" value="Znf_RING/FYVE/PHD"/>
</dbReference>
<dbReference type="PANTHER" id="PTHR15439:SF0">
    <property type="entry name" value="CELL DIVISION CYCLE AND APOPTOSIS REGULATOR PROTEIN 1-RELATED"/>
    <property type="match status" value="1"/>
</dbReference>
<dbReference type="PANTHER" id="PTHR15439">
    <property type="entry name" value="RETINOBLASTOMA-BINDING PROTEIN 6"/>
    <property type="match status" value="1"/>
</dbReference>
<dbReference type="Pfam" id="PF08783">
    <property type="entry name" value="DWNN"/>
    <property type="match status" value="1"/>
</dbReference>
<dbReference type="SMART" id="SM01180">
    <property type="entry name" value="DWNN"/>
    <property type="match status" value="1"/>
</dbReference>
<dbReference type="SMART" id="SM00343">
    <property type="entry name" value="ZnF_C2HC"/>
    <property type="match status" value="1"/>
</dbReference>
<dbReference type="SUPFAM" id="SSF57756">
    <property type="entry name" value="Retrovirus zinc finger-like domains"/>
    <property type="match status" value="1"/>
</dbReference>
<dbReference type="SUPFAM" id="SSF57850">
    <property type="entry name" value="RING/U-box"/>
    <property type="match status" value="1"/>
</dbReference>
<dbReference type="PROSITE" id="PS51282">
    <property type="entry name" value="DWNN"/>
    <property type="match status" value="1"/>
</dbReference>
<dbReference type="PROSITE" id="PS50158">
    <property type="entry name" value="ZF_CCHC"/>
    <property type="match status" value="1"/>
</dbReference>
<accession>P35728</accession>
<accession>D6VXM8</accession>
<gene>
    <name type="primary">MPE1</name>
    <name type="ordered locus">YKL059C</name>
    <name type="ORF">YKL316</name>
</gene>
<organism>
    <name type="scientific">Saccharomyces cerevisiae (strain ATCC 204508 / S288c)</name>
    <name type="common">Baker's yeast</name>
    <dbReference type="NCBI Taxonomy" id="559292"/>
    <lineage>
        <taxon>Eukaryota</taxon>
        <taxon>Fungi</taxon>
        <taxon>Dikarya</taxon>
        <taxon>Ascomycota</taxon>
        <taxon>Saccharomycotina</taxon>
        <taxon>Saccharomycetes</taxon>
        <taxon>Saccharomycetales</taxon>
        <taxon>Saccharomycetaceae</taxon>
        <taxon>Saccharomyces</taxon>
    </lineage>
</organism>
<proteinExistence type="evidence at protein level"/>